<accession>P94212</accession>
<evidence type="ECO:0000256" key="1">
    <source>
        <dbReference type="SAM" id="MobiDB-lite"/>
    </source>
</evidence>
<evidence type="ECO:0000305" key="2"/>
<name>NDDD_ALCXX</name>
<organism>
    <name type="scientific">Alcaligenes xylosoxydans xylosoxydans</name>
    <name type="common">Achromobacter xylosoxidans</name>
    <dbReference type="NCBI Taxonomy" id="85698"/>
    <lineage>
        <taxon>Bacteria</taxon>
        <taxon>Pseudomonadati</taxon>
        <taxon>Pseudomonadota</taxon>
        <taxon>Betaproteobacteria</taxon>
        <taxon>Burkholderiales</taxon>
        <taxon>Alcaligenaceae</taxon>
        <taxon>Achromobacter</taxon>
    </lineage>
</organism>
<reference key="1">
    <citation type="journal article" date="1995" name="J. Ferment. Bioeng.">
        <title>Cloning, expression, and nucleotide sequence of the N-acy1-D-aspartate amidohydrolase gene from Alcaligenes xylosoxydans subsp. xylosoxydans A-6.</title>
        <authorList>
            <person name="Wakayama M."/>
            <person name="Watanabe E."/>
            <person name="Takenaka Y."/>
            <person name="Miyamoto Y."/>
            <person name="Tau Y."/>
            <person name="Sakai K."/>
            <person name="Moriguchi M."/>
        </authorList>
    </citation>
    <scope>NUCLEOTIDE SEQUENCE [GENOMIC DNA]</scope>
    <source>
        <strain>A-6</strain>
    </source>
</reference>
<reference key="2">
    <citation type="journal article" date="1993" name="Biosci. Biotechnol. Biochem.">
        <title>Purification and characterization of novel N-acyl-D-aspartate amidohydrolase from Alcaligenes xylosoxydans subsp. xylosoxydans A-6.</title>
        <authorList>
            <person name="Moriguchi M."/>
            <person name="Sakai K."/>
            <person name="Katsuno Y."/>
            <person name="Maki T."/>
            <person name="Wakayama M."/>
        </authorList>
    </citation>
    <scope>CHARACTERIZATION</scope>
    <source>
        <strain>A-6</strain>
    </source>
</reference>
<protein>
    <recommendedName>
        <fullName>N-acyl-D-aspartate deacylase</fullName>
        <ecNumber>3.5.1.83</ecNumber>
    </recommendedName>
    <alternativeName>
        <fullName>N-acyl-D-aspartate amidohydrolase</fullName>
    </alternativeName>
</protein>
<sequence>MTDRSTLDDAPAQADFIIAGATLIDGGGGPARQGDLAVRGGRIVALGDFAHAPGVPVIDARGLALAPGFIDSHTHDDGYLLAHPEMLPKVSQGITTVVTGNCGISLAPLSRRQIPQPLDLLGPPELFRFATFRDWLRALAETPAAVNVIPLVGHTTLRVAVMDDTGRAATDAERAAMRALLDEALQAGAFGVSTGTFYPPASAAPTDEIIDVCQPLRGRAGAIYATHLRDEADHIVPAMEEALLIGRELDCRVVFSHHKLAGERNHGRSRETLDMISRAAATQRVCLDCHPYPATSTMLRLDRARLASRTLITWSKGYPEATGRDFSEVMAELGLDDEAAIARLAPAGAIYFLMDQADVNRIFSHPLTTVGSDGLPFDPHPHPRQWGTFTNVLRTMVREQRLLSLETAIHKMTGLAAAQYGLTERGLLRQGYHADLVLFDPANVTDTATFSAPIQVSQGIHAVWVNGRQVWDGERTGAERPGQVLAPGDAIPWSQQSE</sequence>
<keyword id="KW-0963">Cytoplasm</keyword>
<keyword id="KW-0378">Hydrolase</keyword>
<keyword id="KW-0862">Zinc</keyword>
<comment type="catalytic activity">
    <reaction>
        <text>an N-acyl-D-aspartate + H2O = D-aspartate + a carboxylate</text>
        <dbReference type="Rhea" id="RHEA:18285"/>
        <dbReference type="ChEBI" id="CHEBI:15377"/>
        <dbReference type="ChEBI" id="CHEBI:29067"/>
        <dbReference type="ChEBI" id="CHEBI:29990"/>
        <dbReference type="ChEBI" id="CHEBI:57512"/>
        <dbReference type="EC" id="3.5.1.83"/>
    </reaction>
</comment>
<comment type="cofactor">
    <cofactor>
        <name>Zn(2+)</name>
        <dbReference type="ChEBI" id="CHEBI:29105"/>
    </cofactor>
</comment>
<comment type="subcellular location">
    <subcellularLocation>
        <location>Cytoplasm</location>
    </subcellularLocation>
</comment>
<comment type="similarity">
    <text evidence="2">Belongs to the metallo-dependent hydrolases superfamily. N-acyl-D-amino-acid deacylase family.</text>
</comment>
<feature type="chain" id="PRO_0000182706" description="N-acyl-D-aspartate deacylase">
    <location>
        <begin position="1"/>
        <end position="498"/>
    </location>
</feature>
<feature type="region of interest" description="Disordered" evidence="1">
    <location>
        <begin position="478"/>
        <end position="498"/>
    </location>
</feature>
<dbReference type="EC" id="3.5.1.83"/>
<dbReference type="EMBL" id="D45919">
    <property type="protein sequence ID" value="BAA08350.1"/>
    <property type="molecule type" value="Genomic_DNA"/>
</dbReference>
<dbReference type="SMR" id="P94212"/>
<dbReference type="KEGG" id="ag:BAA08350"/>
<dbReference type="eggNOG" id="COG3653">
    <property type="taxonomic scope" value="Bacteria"/>
</dbReference>
<dbReference type="GO" id="GO:0005737">
    <property type="term" value="C:cytoplasm"/>
    <property type="evidence" value="ECO:0007669"/>
    <property type="project" value="UniProtKB-SubCell"/>
</dbReference>
<dbReference type="GO" id="GO:0047422">
    <property type="term" value="F:N-acyl-D-aspartate deacylase activity"/>
    <property type="evidence" value="ECO:0007669"/>
    <property type="project" value="UniProtKB-EC"/>
</dbReference>
<dbReference type="CDD" id="cd01297">
    <property type="entry name" value="D-aminoacylase"/>
    <property type="match status" value="1"/>
</dbReference>
<dbReference type="Gene3D" id="3.30.1490.130">
    <property type="entry name" value="D-aminoacylase. Domain 3"/>
    <property type="match status" value="1"/>
</dbReference>
<dbReference type="Gene3D" id="3.20.20.140">
    <property type="entry name" value="Metal-dependent hydrolases"/>
    <property type="match status" value="1"/>
</dbReference>
<dbReference type="Gene3D" id="2.30.40.10">
    <property type="entry name" value="Urease, subunit C, domain 1"/>
    <property type="match status" value="1"/>
</dbReference>
<dbReference type="InterPro" id="IPR013108">
    <property type="entry name" value="Amidohydro_3"/>
</dbReference>
<dbReference type="InterPro" id="IPR023100">
    <property type="entry name" value="D-aminoacylase_insert_dom_sf"/>
</dbReference>
<dbReference type="InterPro" id="IPR011059">
    <property type="entry name" value="Metal-dep_hydrolase_composite"/>
</dbReference>
<dbReference type="InterPro" id="IPR032466">
    <property type="entry name" value="Metal_Hydrolase"/>
</dbReference>
<dbReference type="InterPro" id="IPR050378">
    <property type="entry name" value="Metallo-dep_Hydrolases_sf"/>
</dbReference>
<dbReference type="PANTHER" id="PTHR11647:SF1">
    <property type="entry name" value="COLLAPSIN RESPONSE MEDIATOR PROTEIN"/>
    <property type="match status" value="1"/>
</dbReference>
<dbReference type="PANTHER" id="PTHR11647">
    <property type="entry name" value="HYDRANTOINASE/DIHYDROPYRIMIDINASE FAMILY MEMBER"/>
    <property type="match status" value="1"/>
</dbReference>
<dbReference type="Pfam" id="PF07969">
    <property type="entry name" value="Amidohydro_3"/>
    <property type="match status" value="2"/>
</dbReference>
<dbReference type="SUPFAM" id="SSF51338">
    <property type="entry name" value="Composite domain of metallo-dependent hydrolases"/>
    <property type="match status" value="1"/>
</dbReference>
<dbReference type="SUPFAM" id="SSF51556">
    <property type="entry name" value="Metallo-dependent hydrolases"/>
    <property type="match status" value="1"/>
</dbReference>
<proteinExistence type="evidence at protein level"/>